<name>RL22_ECO7I</name>
<gene>
    <name evidence="1" type="primary">rplV</name>
    <name type="ordered locus">ECIAI39_3809</name>
</gene>
<evidence type="ECO:0000255" key="1">
    <source>
        <dbReference type="HAMAP-Rule" id="MF_01331"/>
    </source>
</evidence>
<evidence type="ECO:0000305" key="2"/>
<organism>
    <name type="scientific">Escherichia coli O7:K1 (strain IAI39 / ExPEC)</name>
    <dbReference type="NCBI Taxonomy" id="585057"/>
    <lineage>
        <taxon>Bacteria</taxon>
        <taxon>Pseudomonadati</taxon>
        <taxon>Pseudomonadota</taxon>
        <taxon>Gammaproteobacteria</taxon>
        <taxon>Enterobacterales</taxon>
        <taxon>Enterobacteriaceae</taxon>
        <taxon>Escherichia</taxon>
    </lineage>
</organism>
<sequence length="110" mass="12226">METIAKHRHARSSAQKVRLVADLIRGKKVSQALDILTYTNKKAAVLVKKVLESAIANAEHNDGADIDDLKVTKIFVDEGPSMKRIMPRAKGRADRILKRTSHITVVVSDR</sequence>
<keyword id="KW-0687">Ribonucleoprotein</keyword>
<keyword id="KW-0689">Ribosomal protein</keyword>
<keyword id="KW-0694">RNA-binding</keyword>
<keyword id="KW-0699">rRNA-binding</keyword>
<comment type="function">
    <text evidence="1">This protein binds specifically to 23S rRNA; its binding is stimulated by other ribosomal proteins, e.g. L4, L17, and L20. It is important during the early stages of 50S assembly. It makes multiple contacts with different domains of the 23S rRNA in the assembled 50S subunit and ribosome (By similarity).</text>
</comment>
<comment type="function">
    <text evidence="1">The globular domain of the protein is located near the polypeptide exit tunnel on the outside of the subunit, while an extended beta-hairpin is found that lines the wall of the exit tunnel in the center of the 70S ribosome.</text>
</comment>
<comment type="subunit">
    <text evidence="1">Part of the 50S ribosomal subunit.</text>
</comment>
<comment type="similarity">
    <text evidence="1">Belongs to the universal ribosomal protein uL22 family.</text>
</comment>
<accession>B7NLN4</accession>
<reference key="1">
    <citation type="journal article" date="2009" name="PLoS Genet.">
        <title>Organised genome dynamics in the Escherichia coli species results in highly diverse adaptive paths.</title>
        <authorList>
            <person name="Touchon M."/>
            <person name="Hoede C."/>
            <person name="Tenaillon O."/>
            <person name="Barbe V."/>
            <person name="Baeriswyl S."/>
            <person name="Bidet P."/>
            <person name="Bingen E."/>
            <person name="Bonacorsi S."/>
            <person name="Bouchier C."/>
            <person name="Bouvet O."/>
            <person name="Calteau A."/>
            <person name="Chiapello H."/>
            <person name="Clermont O."/>
            <person name="Cruveiller S."/>
            <person name="Danchin A."/>
            <person name="Diard M."/>
            <person name="Dossat C."/>
            <person name="Karoui M.E."/>
            <person name="Frapy E."/>
            <person name="Garry L."/>
            <person name="Ghigo J.M."/>
            <person name="Gilles A.M."/>
            <person name="Johnson J."/>
            <person name="Le Bouguenec C."/>
            <person name="Lescat M."/>
            <person name="Mangenot S."/>
            <person name="Martinez-Jehanne V."/>
            <person name="Matic I."/>
            <person name="Nassif X."/>
            <person name="Oztas S."/>
            <person name="Petit M.A."/>
            <person name="Pichon C."/>
            <person name="Rouy Z."/>
            <person name="Ruf C.S."/>
            <person name="Schneider D."/>
            <person name="Tourret J."/>
            <person name="Vacherie B."/>
            <person name="Vallenet D."/>
            <person name="Medigue C."/>
            <person name="Rocha E.P.C."/>
            <person name="Denamur E."/>
        </authorList>
    </citation>
    <scope>NUCLEOTIDE SEQUENCE [LARGE SCALE GENOMIC DNA]</scope>
    <source>
        <strain>IAI39 / ExPEC</strain>
    </source>
</reference>
<proteinExistence type="inferred from homology"/>
<protein>
    <recommendedName>
        <fullName evidence="1">Large ribosomal subunit protein uL22</fullName>
    </recommendedName>
    <alternativeName>
        <fullName evidence="2">50S ribosomal protein L22</fullName>
    </alternativeName>
</protein>
<dbReference type="EMBL" id="CU928164">
    <property type="protein sequence ID" value="CAR19923.1"/>
    <property type="molecule type" value="Genomic_DNA"/>
</dbReference>
<dbReference type="RefSeq" id="WP_000447529.1">
    <property type="nucleotide sequence ID" value="NC_011750.1"/>
</dbReference>
<dbReference type="RefSeq" id="YP_002409706.1">
    <property type="nucleotide sequence ID" value="NC_011750.1"/>
</dbReference>
<dbReference type="SMR" id="B7NLN4"/>
<dbReference type="STRING" id="585057.ECIAI39_3809"/>
<dbReference type="GeneID" id="93778672"/>
<dbReference type="KEGG" id="ect:ECIAI39_3809"/>
<dbReference type="PATRIC" id="fig|585057.6.peg.3946"/>
<dbReference type="HOGENOM" id="CLU_083987_3_3_6"/>
<dbReference type="PRO" id="PR:B7NLN4"/>
<dbReference type="Proteomes" id="UP000000749">
    <property type="component" value="Chromosome"/>
</dbReference>
<dbReference type="GO" id="GO:0022625">
    <property type="term" value="C:cytosolic large ribosomal subunit"/>
    <property type="evidence" value="ECO:0007669"/>
    <property type="project" value="TreeGrafter"/>
</dbReference>
<dbReference type="GO" id="GO:0019843">
    <property type="term" value="F:rRNA binding"/>
    <property type="evidence" value="ECO:0007669"/>
    <property type="project" value="UniProtKB-UniRule"/>
</dbReference>
<dbReference type="GO" id="GO:0003735">
    <property type="term" value="F:structural constituent of ribosome"/>
    <property type="evidence" value="ECO:0007669"/>
    <property type="project" value="InterPro"/>
</dbReference>
<dbReference type="GO" id="GO:0006412">
    <property type="term" value="P:translation"/>
    <property type="evidence" value="ECO:0007669"/>
    <property type="project" value="UniProtKB-UniRule"/>
</dbReference>
<dbReference type="CDD" id="cd00336">
    <property type="entry name" value="Ribosomal_L22"/>
    <property type="match status" value="1"/>
</dbReference>
<dbReference type="FunFam" id="3.90.470.10:FF:000001">
    <property type="entry name" value="50S ribosomal protein L22"/>
    <property type="match status" value="1"/>
</dbReference>
<dbReference type="Gene3D" id="3.90.470.10">
    <property type="entry name" value="Ribosomal protein L22/L17"/>
    <property type="match status" value="1"/>
</dbReference>
<dbReference type="HAMAP" id="MF_01331_B">
    <property type="entry name" value="Ribosomal_uL22_B"/>
    <property type="match status" value="1"/>
</dbReference>
<dbReference type="InterPro" id="IPR001063">
    <property type="entry name" value="Ribosomal_uL22"/>
</dbReference>
<dbReference type="InterPro" id="IPR005727">
    <property type="entry name" value="Ribosomal_uL22_bac/chlpt-type"/>
</dbReference>
<dbReference type="InterPro" id="IPR047867">
    <property type="entry name" value="Ribosomal_uL22_bac/org-type"/>
</dbReference>
<dbReference type="InterPro" id="IPR018260">
    <property type="entry name" value="Ribosomal_uL22_CS"/>
</dbReference>
<dbReference type="InterPro" id="IPR036394">
    <property type="entry name" value="Ribosomal_uL22_sf"/>
</dbReference>
<dbReference type="NCBIfam" id="TIGR01044">
    <property type="entry name" value="rplV_bact"/>
    <property type="match status" value="1"/>
</dbReference>
<dbReference type="PANTHER" id="PTHR13501">
    <property type="entry name" value="CHLOROPLAST 50S RIBOSOMAL PROTEIN L22-RELATED"/>
    <property type="match status" value="1"/>
</dbReference>
<dbReference type="PANTHER" id="PTHR13501:SF8">
    <property type="entry name" value="LARGE RIBOSOMAL SUBUNIT PROTEIN UL22M"/>
    <property type="match status" value="1"/>
</dbReference>
<dbReference type="Pfam" id="PF00237">
    <property type="entry name" value="Ribosomal_L22"/>
    <property type="match status" value="1"/>
</dbReference>
<dbReference type="SUPFAM" id="SSF54843">
    <property type="entry name" value="Ribosomal protein L22"/>
    <property type="match status" value="1"/>
</dbReference>
<dbReference type="PROSITE" id="PS00464">
    <property type="entry name" value="RIBOSOMAL_L22"/>
    <property type="match status" value="1"/>
</dbReference>
<feature type="chain" id="PRO_1000142256" description="Large ribosomal subunit protein uL22">
    <location>
        <begin position="1"/>
        <end position="110"/>
    </location>
</feature>